<accession>Q8ELT9</accession>
<evidence type="ECO:0000255" key="1">
    <source>
        <dbReference type="HAMAP-Rule" id="MF_00006"/>
    </source>
</evidence>
<keyword id="KW-0028">Amino-acid biosynthesis</keyword>
<keyword id="KW-0055">Arginine biosynthesis</keyword>
<keyword id="KW-0963">Cytoplasm</keyword>
<keyword id="KW-0456">Lyase</keyword>
<keyword id="KW-1185">Reference proteome</keyword>
<name>ARLY_OCEIH</name>
<organism>
    <name type="scientific">Oceanobacillus iheyensis (strain DSM 14371 / CIP 107618 / JCM 11309 / KCTC 3954 / HTE831)</name>
    <dbReference type="NCBI Taxonomy" id="221109"/>
    <lineage>
        <taxon>Bacteria</taxon>
        <taxon>Bacillati</taxon>
        <taxon>Bacillota</taxon>
        <taxon>Bacilli</taxon>
        <taxon>Bacillales</taxon>
        <taxon>Bacillaceae</taxon>
        <taxon>Oceanobacillus</taxon>
    </lineage>
</organism>
<comment type="catalytic activity">
    <reaction evidence="1">
        <text>2-(N(omega)-L-arginino)succinate = fumarate + L-arginine</text>
        <dbReference type="Rhea" id="RHEA:24020"/>
        <dbReference type="ChEBI" id="CHEBI:29806"/>
        <dbReference type="ChEBI" id="CHEBI:32682"/>
        <dbReference type="ChEBI" id="CHEBI:57472"/>
        <dbReference type="EC" id="4.3.2.1"/>
    </reaction>
</comment>
<comment type="pathway">
    <text evidence="1">Amino-acid biosynthesis; L-arginine biosynthesis; L-arginine from L-ornithine and carbamoyl phosphate: step 3/3.</text>
</comment>
<comment type="subcellular location">
    <subcellularLocation>
        <location evidence="1">Cytoplasm</location>
    </subcellularLocation>
</comment>
<comment type="similarity">
    <text evidence="1">Belongs to the lyase 1 family. Argininosuccinate lyase subfamily.</text>
</comment>
<proteinExistence type="inferred from homology"/>
<protein>
    <recommendedName>
        <fullName evidence="1">Argininosuccinate lyase</fullName>
        <shortName evidence="1">ASAL</shortName>
        <ecNumber evidence="1">4.3.2.1</ecNumber>
    </recommendedName>
    <alternativeName>
        <fullName evidence="1">Arginosuccinase</fullName>
    </alternativeName>
</protein>
<reference key="1">
    <citation type="journal article" date="2002" name="Nucleic Acids Res.">
        <title>Genome sequence of Oceanobacillus iheyensis isolated from the Iheya Ridge and its unexpected adaptive capabilities to extreme environments.</title>
        <authorList>
            <person name="Takami H."/>
            <person name="Takaki Y."/>
            <person name="Uchiyama I."/>
        </authorList>
    </citation>
    <scope>NUCLEOTIDE SEQUENCE [LARGE SCALE GENOMIC DNA]</scope>
    <source>
        <strain>DSM 14371 / CIP 107618 / JCM 11309 / KCTC 3954 / HTE831</strain>
    </source>
</reference>
<dbReference type="EC" id="4.3.2.1" evidence="1"/>
<dbReference type="EMBL" id="BA000028">
    <property type="protein sequence ID" value="BAC15084.1"/>
    <property type="molecule type" value="Genomic_DNA"/>
</dbReference>
<dbReference type="RefSeq" id="WP_011067525.1">
    <property type="nucleotide sequence ID" value="NC_004193.1"/>
</dbReference>
<dbReference type="SMR" id="Q8ELT9"/>
<dbReference type="STRING" id="221109.gene:10735380"/>
<dbReference type="KEGG" id="oih:OB3128"/>
<dbReference type="eggNOG" id="COG0165">
    <property type="taxonomic scope" value="Bacteria"/>
</dbReference>
<dbReference type="HOGENOM" id="CLU_027272_2_3_9"/>
<dbReference type="OrthoDB" id="9769623at2"/>
<dbReference type="PhylomeDB" id="Q8ELT9"/>
<dbReference type="UniPathway" id="UPA00068">
    <property type="reaction ID" value="UER00114"/>
</dbReference>
<dbReference type="Proteomes" id="UP000000822">
    <property type="component" value="Chromosome"/>
</dbReference>
<dbReference type="GO" id="GO:0005829">
    <property type="term" value="C:cytosol"/>
    <property type="evidence" value="ECO:0007669"/>
    <property type="project" value="TreeGrafter"/>
</dbReference>
<dbReference type="GO" id="GO:0004056">
    <property type="term" value="F:argininosuccinate lyase activity"/>
    <property type="evidence" value="ECO:0007669"/>
    <property type="project" value="UniProtKB-UniRule"/>
</dbReference>
<dbReference type="GO" id="GO:0042450">
    <property type="term" value="P:arginine biosynthetic process via ornithine"/>
    <property type="evidence" value="ECO:0007669"/>
    <property type="project" value="InterPro"/>
</dbReference>
<dbReference type="GO" id="GO:0006526">
    <property type="term" value="P:L-arginine biosynthetic process"/>
    <property type="evidence" value="ECO:0007669"/>
    <property type="project" value="UniProtKB-UniRule"/>
</dbReference>
<dbReference type="CDD" id="cd01359">
    <property type="entry name" value="Argininosuccinate_lyase"/>
    <property type="match status" value="1"/>
</dbReference>
<dbReference type="FunFam" id="1.10.275.10:FF:000002">
    <property type="entry name" value="Argininosuccinate lyase"/>
    <property type="match status" value="1"/>
</dbReference>
<dbReference type="FunFam" id="1.10.40.30:FF:000001">
    <property type="entry name" value="Argininosuccinate lyase"/>
    <property type="match status" value="1"/>
</dbReference>
<dbReference type="FunFam" id="1.20.200.10:FF:000006">
    <property type="entry name" value="Argininosuccinate lyase"/>
    <property type="match status" value="1"/>
</dbReference>
<dbReference type="Gene3D" id="1.10.40.30">
    <property type="entry name" value="Fumarase/aspartase (C-terminal domain)"/>
    <property type="match status" value="1"/>
</dbReference>
<dbReference type="Gene3D" id="1.20.200.10">
    <property type="entry name" value="Fumarase/aspartase (Central domain)"/>
    <property type="match status" value="1"/>
</dbReference>
<dbReference type="Gene3D" id="1.10.275.10">
    <property type="entry name" value="Fumarase/aspartase (N-terminal domain)"/>
    <property type="match status" value="1"/>
</dbReference>
<dbReference type="HAMAP" id="MF_00006">
    <property type="entry name" value="Arg_succ_lyase"/>
    <property type="match status" value="1"/>
</dbReference>
<dbReference type="InterPro" id="IPR029419">
    <property type="entry name" value="Arg_succ_lyase_C"/>
</dbReference>
<dbReference type="InterPro" id="IPR009049">
    <property type="entry name" value="Argininosuccinate_lyase"/>
</dbReference>
<dbReference type="InterPro" id="IPR024083">
    <property type="entry name" value="Fumarase/histidase_N"/>
</dbReference>
<dbReference type="InterPro" id="IPR020557">
    <property type="entry name" value="Fumarate_lyase_CS"/>
</dbReference>
<dbReference type="InterPro" id="IPR000362">
    <property type="entry name" value="Fumarate_lyase_fam"/>
</dbReference>
<dbReference type="InterPro" id="IPR022761">
    <property type="entry name" value="Fumarate_lyase_N"/>
</dbReference>
<dbReference type="InterPro" id="IPR008948">
    <property type="entry name" value="L-Aspartase-like"/>
</dbReference>
<dbReference type="NCBIfam" id="TIGR00838">
    <property type="entry name" value="argH"/>
    <property type="match status" value="1"/>
</dbReference>
<dbReference type="PANTHER" id="PTHR43814">
    <property type="entry name" value="ARGININOSUCCINATE LYASE"/>
    <property type="match status" value="1"/>
</dbReference>
<dbReference type="PANTHER" id="PTHR43814:SF1">
    <property type="entry name" value="ARGININOSUCCINATE LYASE"/>
    <property type="match status" value="1"/>
</dbReference>
<dbReference type="Pfam" id="PF14698">
    <property type="entry name" value="ASL_C2"/>
    <property type="match status" value="1"/>
</dbReference>
<dbReference type="Pfam" id="PF00206">
    <property type="entry name" value="Lyase_1"/>
    <property type="match status" value="1"/>
</dbReference>
<dbReference type="PRINTS" id="PR00145">
    <property type="entry name" value="ARGSUCLYASE"/>
</dbReference>
<dbReference type="PRINTS" id="PR00149">
    <property type="entry name" value="FUMRATELYASE"/>
</dbReference>
<dbReference type="SUPFAM" id="SSF48557">
    <property type="entry name" value="L-aspartase-like"/>
    <property type="match status" value="1"/>
</dbReference>
<dbReference type="PROSITE" id="PS00163">
    <property type="entry name" value="FUMARATE_LYASES"/>
    <property type="match status" value="1"/>
</dbReference>
<sequence>MKLWGGRFTKPTNELVDEYASSIQFDKKLAAYDIEGSLAHVAMLKKCEIIPAEDADKIAEGLKIVLSKIEAGEAELSNEHEDIHMNVEKLLIDEVGPVGGRLHTGRSRNDQVALDMRLYLRDVIAELSDLLKAVQQSLITQAKANMDTVMPGYTHLQRAQPVLFAHHMMAYVFMFQRDVERFQDSLKRVNKSPLGAGALAGTTFPIDRHFVAEQLGFDGICENSLDAVSDRDFVVEFLSNSALVSTHLSRLCEELVQWSSAEFNFVELDDSFTTGSSMMPQKKNPDVAELVRGKTGRVYGHLMGMLTTLKGLPLAYNKDMQEDKEGMFDAHETLKGALQLFAPMMESMKVNKESMYKAVSNDYSNATDLADYLVNKGMTFRESHAVVGEAVLHCIEQNKYLLDLTLKEFKQYSEVIDEDIFDVLKPEAVVNARSVEGGTAKESVLQQIAKAEKLLESAK</sequence>
<gene>
    <name evidence="1" type="primary">argH</name>
    <name type="ordered locus">OB3128</name>
</gene>
<feature type="chain" id="PRO_0000137799" description="Argininosuccinate lyase">
    <location>
        <begin position="1"/>
        <end position="459"/>
    </location>
</feature>